<proteinExistence type="evidence at transcript level"/>
<organism>
    <name type="scientific">Bos taurus</name>
    <name type="common">Bovine</name>
    <dbReference type="NCBI Taxonomy" id="9913"/>
    <lineage>
        <taxon>Eukaryota</taxon>
        <taxon>Metazoa</taxon>
        <taxon>Chordata</taxon>
        <taxon>Craniata</taxon>
        <taxon>Vertebrata</taxon>
        <taxon>Euteleostomi</taxon>
        <taxon>Mammalia</taxon>
        <taxon>Eutheria</taxon>
        <taxon>Laurasiatheria</taxon>
        <taxon>Artiodactyla</taxon>
        <taxon>Ruminantia</taxon>
        <taxon>Pecora</taxon>
        <taxon>Bovidae</taxon>
        <taxon>Bovinae</taxon>
        <taxon>Bos</taxon>
    </lineage>
</organism>
<name>CD166_BOVIN</name>
<sequence>MASKAAPSCRLVFCLLISATVLRPGLGWYTVNSAYGDTIIMPCRVDVPQNLMFGKWKYEKPDGSPVFIAFRSSTKKSVQYDDVPEYKDRLNLSENYTLSISNAKISDEKRFVCMLVTEDDVFEAPTVVKVFKQPSKPEIVSKAPFLETDKLKKLGECISKDSYPDGNITWYRNGKVLQALEGAVVIIFRKQMDSVTQLYTMTSSLEYKTTKADIQMPFTCSVTYYGPSGQKTVYSEQAVFDIYYPTEQVTIQVLPSKNAIKEGDNITLKCLGNGNPPPEEFLFYLPGQPEGIRSSNTYTLTDVKRNATGDYKCSLVDKKSMIASAAITVHYLDLSLNPSGEVTKQIGDALPVSCTISASRNATVVWMKDNVKLRSSPSFSSLHYQDAGNYVCETALQEVEGLKKRESLTLIVEGKPQIKMTKKTDPSGLSKTIICHVEGFPKPAIQWTITGSGSVINQTEESPYINGRYYSKIIISPEENVTLTCTAENQLERTVNSLNVSAISIPEHDEADEISDENKEKVNDQAKLIVGIVVGLLLAALVAGVVYWLYMKKSKTASKHVNKDLGNMEENKKLEENNHKTEA</sequence>
<gene>
    <name type="primary">ALCAM</name>
</gene>
<dbReference type="EMBL" id="AB039957">
    <property type="protein sequence ID" value="BAB32790.1"/>
    <property type="molecule type" value="mRNA"/>
</dbReference>
<dbReference type="RefSeq" id="NP_776663.1">
    <property type="nucleotide sequence ID" value="NM_174238.1"/>
</dbReference>
<dbReference type="SMR" id="Q9BH13"/>
<dbReference type="FunCoup" id="Q9BH13">
    <property type="interactions" value="664"/>
</dbReference>
<dbReference type="STRING" id="9913.ENSBTAP00000000097"/>
<dbReference type="GlyCosmos" id="Q9BH13">
    <property type="glycosylation" value="9 sites, No reported glycans"/>
</dbReference>
<dbReference type="GlyGen" id="Q9BH13">
    <property type="glycosylation" value="9 sites"/>
</dbReference>
<dbReference type="PaxDb" id="9913-ENSBTAP00000000097"/>
<dbReference type="PeptideAtlas" id="Q9BH13"/>
<dbReference type="GeneID" id="281614"/>
<dbReference type="KEGG" id="bta:281614"/>
<dbReference type="CTD" id="214"/>
<dbReference type="eggNOG" id="ENOG502RMQM">
    <property type="taxonomic scope" value="Eukaryota"/>
</dbReference>
<dbReference type="InParanoid" id="Q9BH13"/>
<dbReference type="OrthoDB" id="9945628at2759"/>
<dbReference type="Proteomes" id="UP000009136">
    <property type="component" value="Unplaced"/>
</dbReference>
<dbReference type="GO" id="GO:0030424">
    <property type="term" value="C:axon"/>
    <property type="evidence" value="ECO:0000250"/>
    <property type="project" value="UniProtKB"/>
</dbReference>
<dbReference type="GO" id="GO:0030425">
    <property type="term" value="C:dendrite"/>
    <property type="evidence" value="ECO:0007669"/>
    <property type="project" value="UniProtKB-SubCell"/>
</dbReference>
<dbReference type="GO" id="GO:0001772">
    <property type="term" value="C:immunological synapse"/>
    <property type="evidence" value="ECO:0000250"/>
    <property type="project" value="UniProtKB"/>
</dbReference>
<dbReference type="GO" id="GO:0005886">
    <property type="term" value="C:plasma membrane"/>
    <property type="evidence" value="ECO:0000250"/>
    <property type="project" value="UniProtKB"/>
</dbReference>
<dbReference type="GO" id="GO:0002250">
    <property type="term" value="P:adaptive immune response"/>
    <property type="evidence" value="ECO:0007669"/>
    <property type="project" value="UniProtKB-KW"/>
</dbReference>
<dbReference type="GO" id="GO:0048846">
    <property type="term" value="P:axon extension involved in axon guidance"/>
    <property type="evidence" value="ECO:0000250"/>
    <property type="project" value="UniProtKB"/>
</dbReference>
<dbReference type="GO" id="GO:0007155">
    <property type="term" value="P:cell adhesion"/>
    <property type="evidence" value="ECO:0000250"/>
    <property type="project" value="UniProtKB"/>
</dbReference>
<dbReference type="GO" id="GO:0007157">
    <property type="term" value="P:heterophilic cell-cell adhesion via plasma membrane cell adhesion molecules"/>
    <property type="evidence" value="ECO:0000250"/>
    <property type="project" value="UniProtKB"/>
</dbReference>
<dbReference type="GO" id="GO:1990138">
    <property type="term" value="P:neuron projection extension"/>
    <property type="evidence" value="ECO:0000250"/>
    <property type="project" value="UniProtKB"/>
</dbReference>
<dbReference type="GO" id="GO:0031290">
    <property type="term" value="P:retinal ganglion cell axon guidance"/>
    <property type="evidence" value="ECO:0000250"/>
    <property type="project" value="UniProtKB"/>
</dbReference>
<dbReference type="CDD" id="cd00096">
    <property type="entry name" value="Ig"/>
    <property type="match status" value="2"/>
</dbReference>
<dbReference type="FunFam" id="2.60.40.10:FF:001428">
    <property type="entry name" value="CD166 antigen"/>
    <property type="match status" value="1"/>
</dbReference>
<dbReference type="FunFam" id="2.60.40.10:FF:000351">
    <property type="entry name" value="CD166 antigen isoform X1"/>
    <property type="match status" value="1"/>
</dbReference>
<dbReference type="FunFam" id="2.60.40.10:FF:000383">
    <property type="entry name" value="CD166 antigen isoform X1"/>
    <property type="match status" value="1"/>
</dbReference>
<dbReference type="FunFam" id="2.60.40.10:FF:000384">
    <property type="entry name" value="CD166 antigen isoform X1"/>
    <property type="match status" value="1"/>
</dbReference>
<dbReference type="FunFam" id="2.60.40.10:FF:000472">
    <property type="entry name" value="CD166 antigen isoform X2"/>
    <property type="match status" value="1"/>
</dbReference>
<dbReference type="Gene3D" id="2.60.40.10">
    <property type="entry name" value="Immunoglobulins"/>
    <property type="match status" value="5"/>
</dbReference>
<dbReference type="InterPro" id="IPR013162">
    <property type="entry name" value="CD80_C2-set"/>
</dbReference>
<dbReference type="InterPro" id="IPR007110">
    <property type="entry name" value="Ig-like_dom"/>
</dbReference>
<dbReference type="InterPro" id="IPR036179">
    <property type="entry name" value="Ig-like_dom_sf"/>
</dbReference>
<dbReference type="InterPro" id="IPR013783">
    <property type="entry name" value="Ig-like_fold"/>
</dbReference>
<dbReference type="InterPro" id="IPR003599">
    <property type="entry name" value="Ig_sub"/>
</dbReference>
<dbReference type="InterPro" id="IPR003598">
    <property type="entry name" value="Ig_sub2"/>
</dbReference>
<dbReference type="InterPro" id="IPR051116">
    <property type="entry name" value="Surface_Rcpt/Adhesion_Mol"/>
</dbReference>
<dbReference type="PANTHER" id="PTHR11973:SF2">
    <property type="entry name" value="CD166 ANTIGEN"/>
    <property type="match status" value="1"/>
</dbReference>
<dbReference type="PANTHER" id="PTHR11973">
    <property type="entry name" value="CELL SURFACE GLYCOPROTEIN MUC18-RELATED"/>
    <property type="match status" value="1"/>
</dbReference>
<dbReference type="Pfam" id="PF08205">
    <property type="entry name" value="C2-set_2"/>
    <property type="match status" value="1"/>
</dbReference>
<dbReference type="Pfam" id="PF13927">
    <property type="entry name" value="Ig_3"/>
    <property type="match status" value="1"/>
</dbReference>
<dbReference type="SMART" id="SM00409">
    <property type="entry name" value="IG"/>
    <property type="match status" value="3"/>
</dbReference>
<dbReference type="SMART" id="SM00408">
    <property type="entry name" value="IGc2"/>
    <property type="match status" value="3"/>
</dbReference>
<dbReference type="SUPFAM" id="SSF48726">
    <property type="entry name" value="Immunoglobulin"/>
    <property type="match status" value="4"/>
</dbReference>
<dbReference type="PROSITE" id="PS50835">
    <property type="entry name" value="IG_LIKE"/>
    <property type="match status" value="4"/>
</dbReference>
<keyword id="KW-1064">Adaptive immunity</keyword>
<keyword id="KW-0130">Cell adhesion</keyword>
<keyword id="KW-1003">Cell membrane</keyword>
<keyword id="KW-0966">Cell projection</keyword>
<keyword id="KW-1015">Disulfide bond</keyword>
<keyword id="KW-0325">Glycoprotein</keyword>
<keyword id="KW-0391">Immunity</keyword>
<keyword id="KW-0393">Immunoglobulin domain</keyword>
<keyword id="KW-0472">Membrane</keyword>
<keyword id="KW-1185">Reference proteome</keyword>
<keyword id="KW-0677">Repeat</keyword>
<keyword id="KW-0732">Signal</keyword>
<keyword id="KW-0812">Transmembrane</keyword>
<keyword id="KW-1133">Transmembrane helix</keyword>
<comment type="function">
    <text evidence="1 2 3">Cell adhesion molecule that mediates both heterotypic cell-cell contacts via its interaction with CD6, as well as homotypic cell-cell contacts. Promotes T-cell activation and proliferation via its interactions with CD6 (By similarity). Contributes to the formation and maturation of the immunological synapse via its interactions with CD6 (By similarity). Mediates homotypic interactions with cells that express ALCAM. Mediates attachment of dendritic cells onto endothelial cells via homotypic interaction. Inhibits endothelial cell migration and promotes endothelial tube formation via homotypic interactions. Required for normal organization of the lymph vessel network. Required for normal hematopoietic stem cell engraftment in the bone marrow. Plays a role in hematopoiesis; required for normal numbers of hematopoietic stem cells in bone marrow. Promotes in vitro osteoblast proliferation and differentiation (By similarity). Promotes neurite extension, axon growth and axon guidance; axons grow preferentially on surfaces that contain ALCAM (By similarity). Mediates outgrowth and pathfinding for retinal ganglion cell axons (By similarity).</text>
</comment>
<comment type="subunit">
    <text evidence="2">Homodimer. Interacts (via extracellular domain) with CD6 (via extracellular domain). Homodimerization and interaction with CD6 involve the same region and cannot occur simultaneously. The affinity for CD6 is much higher than the affinity for self-association. Interacts (via glycosylated extracellular domain) with LGALS1 and LGALS3. Interaction with LGALS1 or LGALS3 inhibits interaction with CD6.</text>
</comment>
<comment type="subcellular location">
    <subcellularLocation>
        <location evidence="3">Cell membrane</location>
        <topology evidence="3">Single-pass type I membrane protein</topology>
    </subcellularLocation>
    <subcellularLocation>
        <location evidence="3">Cell projection</location>
        <location evidence="3">Axon</location>
    </subcellularLocation>
    <subcellularLocation>
        <location evidence="3">Cell projection</location>
        <location evidence="3">Dendrite</location>
    </subcellularLocation>
    <text evidence="2">Detected at the immunological synapse, i.e, at the contact zone between antigen-presenting dendritic cells and T-cells. Colocalizes with CD6 and the TCR/CD3 complex at the immunological synapse.</text>
</comment>
<comment type="tissue specificity">
    <text evidence="7">Constitutively expressed in the autonomic nervous system. Sympathetic and parasympathetic nerve fibers but not myelinated nerve fibers in the spinal nerve.</text>
</comment>
<comment type="domain">
    <text evidence="2">The CD6 binding site is located in the N-terminal Ig-like domain.</text>
</comment>
<comment type="PTM">
    <text evidence="2">Glycosylated.</text>
</comment>
<reference key="1">
    <citation type="journal article" date="2001" name="J. Leukoc. Biol.">
        <title>Tissue distribution of CD6 and CD6 ligand in cattle: expression of the CD6 ligand (CD166) in the autonomic nervous system of cattle and the human.</title>
        <authorList>
            <person name="Konno A."/>
            <person name="Ahn J.-S."/>
            <person name="Kitamura H."/>
            <person name="Hamilton M.J."/>
            <person name="Gebe J.A."/>
            <person name="Aruffo A."/>
            <person name="Davis W.C."/>
        </authorList>
    </citation>
    <scope>NUCLEOTIDE SEQUENCE [MRNA]</scope>
    <scope>TISSUE SPECIFICITY</scope>
    <source>
        <strain>Holstein-Friesian</strain>
        <tissue>Cervicothoracic ganglion</tissue>
    </source>
</reference>
<evidence type="ECO:0000250" key="1">
    <source>
        <dbReference type="UniProtKB" id="P42292"/>
    </source>
</evidence>
<evidence type="ECO:0000250" key="2">
    <source>
        <dbReference type="UniProtKB" id="Q13740"/>
    </source>
</evidence>
<evidence type="ECO:0000250" key="3">
    <source>
        <dbReference type="UniProtKB" id="Q61490"/>
    </source>
</evidence>
<evidence type="ECO:0000255" key="4"/>
<evidence type="ECO:0000255" key="5">
    <source>
        <dbReference type="PROSITE-ProRule" id="PRU00114"/>
    </source>
</evidence>
<evidence type="ECO:0000256" key="6">
    <source>
        <dbReference type="SAM" id="MobiDB-lite"/>
    </source>
</evidence>
<evidence type="ECO:0000269" key="7">
    <source>
    </source>
</evidence>
<feature type="signal peptide" evidence="4">
    <location>
        <begin position="1"/>
        <end position="27"/>
    </location>
</feature>
<feature type="chain" id="PRO_0000014658" description="CD166 antigen">
    <location>
        <begin position="28"/>
        <end position="583"/>
    </location>
</feature>
<feature type="topological domain" description="Extracellular" evidence="4">
    <location>
        <begin position="28"/>
        <end position="527"/>
    </location>
</feature>
<feature type="transmembrane region" description="Helical" evidence="4">
    <location>
        <begin position="528"/>
        <end position="549"/>
    </location>
</feature>
<feature type="topological domain" description="Cytoplasmic" evidence="4">
    <location>
        <begin position="550"/>
        <end position="583"/>
    </location>
</feature>
<feature type="domain" description="Ig-like V-type 1">
    <location>
        <begin position="28"/>
        <end position="120"/>
    </location>
</feature>
<feature type="domain" description="Ig-like V-type 2">
    <location>
        <begin position="125"/>
        <end position="234"/>
    </location>
</feature>
<feature type="domain" description="Ig-like C2-type 1">
    <location>
        <begin position="245"/>
        <end position="328"/>
    </location>
</feature>
<feature type="domain" description="Ig-like C2-type 2">
    <location>
        <begin position="333"/>
        <end position="409"/>
    </location>
</feature>
<feature type="domain" description="Ig-like C2-type 3">
    <location>
        <begin position="416"/>
        <end position="501"/>
    </location>
</feature>
<feature type="region of interest" description="Disordered" evidence="6">
    <location>
        <begin position="562"/>
        <end position="583"/>
    </location>
</feature>
<feature type="compositionally biased region" description="Basic and acidic residues" evidence="6">
    <location>
        <begin position="569"/>
        <end position="583"/>
    </location>
</feature>
<feature type="glycosylation site" description="N-linked (GlcNAc...) asparagine" evidence="4">
    <location>
        <position position="91"/>
    </location>
</feature>
<feature type="glycosylation site" description="N-linked (GlcNAc...) asparagine" evidence="4">
    <location>
        <position position="95"/>
    </location>
</feature>
<feature type="glycosylation site" description="N-linked (GlcNAc...) asparagine" evidence="4">
    <location>
        <position position="167"/>
    </location>
</feature>
<feature type="glycosylation site" description="N-linked (GlcNAc...) asparagine" evidence="4">
    <location>
        <position position="265"/>
    </location>
</feature>
<feature type="glycosylation site" description="N-linked (GlcNAc...) asparagine" evidence="4">
    <location>
        <position position="306"/>
    </location>
</feature>
<feature type="glycosylation site" description="N-linked (GlcNAc...) asparagine" evidence="4">
    <location>
        <position position="361"/>
    </location>
</feature>
<feature type="glycosylation site" description="N-linked (GlcNAc...) asparagine" evidence="4">
    <location>
        <position position="457"/>
    </location>
</feature>
<feature type="glycosylation site" description="N-linked (GlcNAc...) asparagine" evidence="4">
    <location>
        <position position="480"/>
    </location>
</feature>
<feature type="glycosylation site" description="N-linked (GlcNAc...) asparagine" evidence="4">
    <location>
        <position position="499"/>
    </location>
</feature>
<feature type="disulfide bond" evidence="5">
    <location>
        <begin position="43"/>
        <end position="113"/>
    </location>
</feature>
<feature type="disulfide bond" evidence="5">
    <location>
        <begin position="157"/>
        <end position="220"/>
    </location>
</feature>
<feature type="disulfide bond" evidence="5">
    <location>
        <begin position="270"/>
        <end position="313"/>
    </location>
</feature>
<feature type="disulfide bond" evidence="5">
    <location>
        <begin position="354"/>
        <end position="392"/>
    </location>
</feature>
<feature type="disulfide bond" evidence="5">
    <location>
        <begin position="435"/>
        <end position="485"/>
    </location>
</feature>
<accession>Q9BH13</accession>
<protein>
    <recommendedName>
        <fullName>CD166 antigen</fullName>
    </recommendedName>
    <alternativeName>
        <fullName>Activated leukocyte cell adhesion molecule</fullName>
    </alternativeName>
    <cdAntigenName>CD166</cdAntigenName>
</protein>